<reference key="1">
    <citation type="submission" date="2003-05" db="UniProtKB">
        <title>Comparative study of protein profiles on pathogenic and nonpathogenic Naegleria species by 2D-PAGE.</title>
        <authorList>
            <person name="Omura M."/>
            <person name="Furushima-Shimogawara R."/>
            <person name="Izumiyama S."/>
            <person name="Endo T."/>
        </authorList>
    </citation>
    <scope>PROTEIN SEQUENCE</scope>
    <source>
        <strain>ATCC 30214 / Nf 66</strain>
    </source>
</reference>
<organism>
    <name type="scientific">Naegleria fowleri</name>
    <name type="common">Brain eating amoeba</name>
    <dbReference type="NCBI Taxonomy" id="5763"/>
    <lineage>
        <taxon>Eukaryota</taxon>
        <taxon>Discoba</taxon>
        <taxon>Heterolobosea</taxon>
        <taxon>Tetramitia</taxon>
        <taxon>Eutetramitia</taxon>
        <taxon>Vahlkampfiidae</taxon>
        <taxon>Naegleria</taxon>
    </lineage>
</organism>
<name>NF16_NAEFO</name>
<comment type="miscellaneous">
    <text>On the 2D-gel the determined pI of this unknown protein is: 6.9, its MW is: 19.8 kDa.</text>
</comment>
<proteinExistence type="evidence at protein level"/>
<sequence>MITVPHVVNLNLTGQWRENGGQI</sequence>
<accession>P83598</accession>
<keyword id="KW-0903">Direct protein sequencing</keyword>
<feature type="chain" id="PRO_0000055491" description="Unknown protein NF016 from 2D-PAGE">
    <location>
        <begin position="1"/>
        <end position="23" status="greater than"/>
    </location>
</feature>
<feature type="non-terminal residue">
    <location>
        <position position="23"/>
    </location>
</feature>
<protein>
    <recommendedName>
        <fullName>Unknown protein NF016 from 2D-PAGE</fullName>
    </recommendedName>
</protein>